<protein>
    <recommendedName>
        <fullName>Glycoprotein endo-alpha-1,2-mannosidase</fullName>
        <shortName>Endo-alpha mannosidase</shortName>
        <shortName>Endomannosidase</shortName>
        <shortName>mEndo</shortName>
        <ecNumber evidence="2">3.2.1.130</ecNumber>
    </recommendedName>
</protein>
<feature type="chain" id="PRO_0000282316" description="Glycoprotein endo-alpha-1,2-mannosidase">
    <location>
        <begin position="1"/>
        <end position="462"/>
    </location>
</feature>
<feature type="topological domain" description="Cytoplasmic" evidence="3">
    <location>
        <begin position="1"/>
        <end position="9"/>
    </location>
</feature>
<feature type="transmembrane region" description="Helical; Signal-anchor for type II membrane protein" evidence="3">
    <location>
        <begin position="10"/>
        <end position="30"/>
    </location>
</feature>
<feature type="topological domain" description="Lumenal" evidence="3">
    <location>
        <begin position="31"/>
        <end position="462"/>
    </location>
</feature>
<feature type="region of interest" description="Catalytic" evidence="1">
    <location>
        <begin position="60"/>
        <end position="462"/>
    </location>
</feature>
<feature type="sequence conflict" description="In Ref. 1; BAC26805." evidence="4" ref="1">
    <original>P</original>
    <variation>L</variation>
    <location>
        <position position="294"/>
    </location>
</feature>
<proteinExistence type="evidence at transcript level"/>
<reference key="1">
    <citation type="journal article" date="2005" name="Science">
        <title>The transcriptional landscape of the mammalian genome.</title>
        <authorList>
            <person name="Carninci P."/>
            <person name="Kasukawa T."/>
            <person name="Katayama S."/>
            <person name="Gough J."/>
            <person name="Frith M.C."/>
            <person name="Maeda N."/>
            <person name="Oyama R."/>
            <person name="Ravasi T."/>
            <person name="Lenhard B."/>
            <person name="Wells C."/>
            <person name="Kodzius R."/>
            <person name="Shimokawa K."/>
            <person name="Bajic V.B."/>
            <person name="Brenner S.E."/>
            <person name="Batalov S."/>
            <person name="Forrest A.R."/>
            <person name="Zavolan M."/>
            <person name="Davis M.J."/>
            <person name="Wilming L.G."/>
            <person name="Aidinis V."/>
            <person name="Allen J.E."/>
            <person name="Ambesi-Impiombato A."/>
            <person name="Apweiler R."/>
            <person name="Aturaliya R.N."/>
            <person name="Bailey T.L."/>
            <person name="Bansal M."/>
            <person name="Baxter L."/>
            <person name="Beisel K.W."/>
            <person name="Bersano T."/>
            <person name="Bono H."/>
            <person name="Chalk A.M."/>
            <person name="Chiu K.P."/>
            <person name="Choudhary V."/>
            <person name="Christoffels A."/>
            <person name="Clutterbuck D.R."/>
            <person name="Crowe M.L."/>
            <person name="Dalla E."/>
            <person name="Dalrymple B.P."/>
            <person name="de Bono B."/>
            <person name="Della Gatta G."/>
            <person name="di Bernardo D."/>
            <person name="Down T."/>
            <person name="Engstrom P."/>
            <person name="Fagiolini M."/>
            <person name="Faulkner G."/>
            <person name="Fletcher C.F."/>
            <person name="Fukushima T."/>
            <person name="Furuno M."/>
            <person name="Futaki S."/>
            <person name="Gariboldi M."/>
            <person name="Georgii-Hemming P."/>
            <person name="Gingeras T.R."/>
            <person name="Gojobori T."/>
            <person name="Green R.E."/>
            <person name="Gustincich S."/>
            <person name="Harbers M."/>
            <person name="Hayashi Y."/>
            <person name="Hensch T.K."/>
            <person name="Hirokawa N."/>
            <person name="Hill D."/>
            <person name="Huminiecki L."/>
            <person name="Iacono M."/>
            <person name="Ikeo K."/>
            <person name="Iwama A."/>
            <person name="Ishikawa T."/>
            <person name="Jakt M."/>
            <person name="Kanapin A."/>
            <person name="Katoh M."/>
            <person name="Kawasawa Y."/>
            <person name="Kelso J."/>
            <person name="Kitamura H."/>
            <person name="Kitano H."/>
            <person name="Kollias G."/>
            <person name="Krishnan S.P."/>
            <person name="Kruger A."/>
            <person name="Kummerfeld S.K."/>
            <person name="Kurochkin I.V."/>
            <person name="Lareau L.F."/>
            <person name="Lazarevic D."/>
            <person name="Lipovich L."/>
            <person name="Liu J."/>
            <person name="Liuni S."/>
            <person name="McWilliam S."/>
            <person name="Madan Babu M."/>
            <person name="Madera M."/>
            <person name="Marchionni L."/>
            <person name="Matsuda H."/>
            <person name="Matsuzawa S."/>
            <person name="Miki H."/>
            <person name="Mignone F."/>
            <person name="Miyake S."/>
            <person name="Morris K."/>
            <person name="Mottagui-Tabar S."/>
            <person name="Mulder N."/>
            <person name="Nakano N."/>
            <person name="Nakauchi H."/>
            <person name="Ng P."/>
            <person name="Nilsson R."/>
            <person name="Nishiguchi S."/>
            <person name="Nishikawa S."/>
            <person name="Nori F."/>
            <person name="Ohara O."/>
            <person name="Okazaki Y."/>
            <person name="Orlando V."/>
            <person name="Pang K.C."/>
            <person name="Pavan W.J."/>
            <person name="Pavesi G."/>
            <person name="Pesole G."/>
            <person name="Petrovsky N."/>
            <person name="Piazza S."/>
            <person name="Reed J."/>
            <person name="Reid J.F."/>
            <person name="Ring B.Z."/>
            <person name="Ringwald M."/>
            <person name="Rost B."/>
            <person name="Ruan Y."/>
            <person name="Salzberg S.L."/>
            <person name="Sandelin A."/>
            <person name="Schneider C."/>
            <person name="Schoenbach C."/>
            <person name="Sekiguchi K."/>
            <person name="Semple C.A."/>
            <person name="Seno S."/>
            <person name="Sessa L."/>
            <person name="Sheng Y."/>
            <person name="Shibata Y."/>
            <person name="Shimada H."/>
            <person name="Shimada K."/>
            <person name="Silva D."/>
            <person name="Sinclair B."/>
            <person name="Sperling S."/>
            <person name="Stupka E."/>
            <person name="Sugiura K."/>
            <person name="Sultana R."/>
            <person name="Takenaka Y."/>
            <person name="Taki K."/>
            <person name="Tammoja K."/>
            <person name="Tan S.L."/>
            <person name="Tang S."/>
            <person name="Taylor M.S."/>
            <person name="Tegner J."/>
            <person name="Teichmann S.A."/>
            <person name="Ueda H.R."/>
            <person name="van Nimwegen E."/>
            <person name="Verardo R."/>
            <person name="Wei C.L."/>
            <person name="Yagi K."/>
            <person name="Yamanishi H."/>
            <person name="Zabarovsky E."/>
            <person name="Zhu S."/>
            <person name="Zimmer A."/>
            <person name="Hide W."/>
            <person name="Bult C."/>
            <person name="Grimmond S.M."/>
            <person name="Teasdale R.D."/>
            <person name="Liu E.T."/>
            <person name="Brusic V."/>
            <person name="Quackenbush J."/>
            <person name="Wahlestedt C."/>
            <person name="Mattick J.S."/>
            <person name="Hume D.A."/>
            <person name="Kai C."/>
            <person name="Sasaki D."/>
            <person name="Tomaru Y."/>
            <person name="Fukuda S."/>
            <person name="Kanamori-Katayama M."/>
            <person name="Suzuki M."/>
            <person name="Aoki J."/>
            <person name="Arakawa T."/>
            <person name="Iida J."/>
            <person name="Imamura K."/>
            <person name="Itoh M."/>
            <person name="Kato T."/>
            <person name="Kawaji H."/>
            <person name="Kawagashira N."/>
            <person name="Kawashima T."/>
            <person name="Kojima M."/>
            <person name="Kondo S."/>
            <person name="Konno H."/>
            <person name="Nakano K."/>
            <person name="Ninomiya N."/>
            <person name="Nishio T."/>
            <person name="Okada M."/>
            <person name="Plessy C."/>
            <person name="Shibata K."/>
            <person name="Shiraki T."/>
            <person name="Suzuki S."/>
            <person name="Tagami M."/>
            <person name="Waki K."/>
            <person name="Watahiki A."/>
            <person name="Okamura-Oho Y."/>
            <person name="Suzuki H."/>
            <person name="Kawai J."/>
            <person name="Hayashizaki Y."/>
        </authorList>
    </citation>
    <scope>NUCLEOTIDE SEQUENCE [LARGE SCALE MRNA]</scope>
    <source>
        <strain>C57BL/6J</strain>
        <tissue>Testis</tissue>
    </source>
</reference>
<reference key="2">
    <citation type="journal article" date="2009" name="PLoS Biol.">
        <title>Lineage-specific biology revealed by a finished genome assembly of the mouse.</title>
        <authorList>
            <person name="Church D.M."/>
            <person name="Goodstadt L."/>
            <person name="Hillier L.W."/>
            <person name="Zody M.C."/>
            <person name="Goldstein S."/>
            <person name="She X."/>
            <person name="Bult C.J."/>
            <person name="Agarwala R."/>
            <person name="Cherry J.L."/>
            <person name="DiCuccio M."/>
            <person name="Hlavina W."/>
            <person name="Kapustin Y."/>
            <person name="Meric P."/>
            <person name="Maglott D."/>
            <person name="Birtle Z."/>
            <person name="Marques A.C."/>
            <person name="Graves T."/>
            <person name="Zhou S."/>
            <person name="Teague B."/>
            <person name="Potamousis K."/>
            <person name="Churas C."/>
            <person name="Place M."/>
            <person name="Herschleb J."/>
            <person name="Runnheim R."/>
            <person name="Forrest D."/>
            <person name="Amos-Landgraf J."/>
            <person name="Schwartz D.C."/>
            <person name="Cheng Z."/>
            <person name="Lindblad-Toh K."/>
            <person name="Eichler E.E."/>
            <person name="Ponting C.P."/>
        </authorList>
    </citation>
    <scope>NUCLEOTIDE SEQUENCE [LARGE SCALE GENOMIC DNA]</scope>
    <source>
        <strain>C57BL/6J</strain>
    </source>
</reference>
<reference key="3">
    <citation type="journal article" date="2004" name="Genome Res.">
        <title>The status, quality, and expansion of the NIH full-length cDNA project: the Mammalian Gene Collection (MGC).</title>
        <authorList>
            <consortium name="The MGC Project Team"/>
        </authorList>
    </citation>
    <scope>NUCLEOTIDE SEQUENCE [LARGE SCALE MRNA]</scope>
    <source>
        <strain>C57BL/6J</strain>
        <tissue>Eye</tissue>
    </source>
</reference>
<keyword id="KW-0333">Golgi apparatus</keyword>
<keyword id="KW-0378">Hydrolase</keyword>
<keyword id="KW-0472">Membrane</keyword>
<keyword id="KW-1185">Reference proteome</keyword>
<keyword id="KW-0735">Signal-anchor</keyword>
<keyword id="KW-0812">Transmembrane</keyword>
<keyword id="KW-1133">Transmembrane helix</keyword>
<name>MANEA_MOUSE</name>
<dbReference type="EC" id="3.2.1.130" evidence="2"/>
<dbReference type="EMBL" id="AK030141">
    <property type="protein sequence ID" value="BAC26805.1"/>
    <property type="molecule type" value="mRNA"/>
</dbReference>
<dbReference type="EMBL" id="AL805949">
    <property type="status" value="NOT_ANNOTATED_CDS"/>
    <property type="molecule type" value="Genomic_DNA"/>
</dbReference>
<dbReference type="EMBL" id="BC067076">
    <property type="protein sequence ID" value="AAH67076.1"/>
    <property type="molecule type" value="mRNA"/>
</dbReference>
<dbReference type="CCDS" id="CCDS18012.1"/>
<dbReference type="RefSeq" id="NP_766453.2">
    <property type="nucleotide sequence ID" value="NM_172865.2"/>
</dbReference>
<dbReference type="RefSeq" id="XP_006537962.1">
    <property type="nucleotide sequence ID" value="XM_006537899.5"/>
</dbReference>
<dbReference type="SMR" id="Q6NXH2"/>
<dbReference type="FunCoup" id="Q6NXH2">
    <property type="interactions" value="1028"/>
</dbReference>
<dbReference type="STRING" id="10090.ENSMUSP00000038671"/>
<dbReference type="CAZy" id="GH99">
    <property type="family name" value="Glycoside Hydrolase Family 99"/>
</dbReference>
<dbReference type="PhosphoSitePlus" id="Q6NXH2"/>
<dbReference type="PaxDb" id="10090-ENSMUSP00000038671"/>
<dbReference type="PeptideAtlas" id="Q6NXH2"/>
<dbReference type="ProteomicsDB" id="295777"/>
<dbReference type="Antibodypedia" id="2637">
    <property type="antibodies" value="55 antibodies from 19 providers"/>
</dbReference>
<dbReference type="Ensembl" id="ENSMUST00000041374.8">
    <property type="protein sequence ID" value="ENSMUSP00000038671.8"/>
    <property type="gene ID" value="ENSMUSG00000040520.8"/>
</dbReference>
<dbReference type="GeneID" id="242362"/>
<dbReference type="KEGG" id="mmu:242362"/>
<dbReference type="UCSC" id="uc008sej.1">
    <property type="organism name" value="mouse"/>
</dbReference>
<dbReference type="AGR" id="MGI:2444484"/>
<dbReference type="CTD" id="79694"/>
<dbReference type="MGI" id="MGI:2444484">
    <property type="gene designation" value="Manea"/>
</dbReference>
<dbReference type="VEuPathDB" id="HostDB:ENSMUSG00000040520"/>
<dbReference type="eggNOG" id="ENOG502QPJV">
    <property type="taxonomic scope" value="Eukaryota"/>
</dbReference>
<dbReference type="GeneTree" id="ENSGT00390000016054"/>
<dbReference type="HOGENOM" id="CLU_042710_1_1_1"/>
<dbReference type="InParanoid" id="Q6NXH2"/>
<dbReference type="OMA" id="GFLDYNP"/>
<dbReference type="OrthoDB" id="406152at2759"/>
<dbReference type="PhylomeDB" id="Q6NXH2"/>
<dbReference type="TreeFam" id="TF324051"/>
<dbReference type="Reactome" id="R-MMU-964739">
    <property type="pathway name" value="N-glycan trimming and elongation in the cis-Golgi"/>
</dbReference>
<dbReference type="BioGRID-ORCS" id="242362">
    <property type="hits" value="2 hits in 78 CRISPR screens"/>
</dbReference>
<dbReference type="ChiTaRS" id="Manea">
    <property type="organism name" value="mouse"/>
</dbReference>
<dbReference type="PRO" id="PR:Q6NXH2"/>
<dbReference type="Proteomes" id="UP000000589">
    <property type="component" value="Chromosome 4"/>
</dbReference>
<dbReference type="RNAct" id="Q6NXH2">
    <property type="molecule type" value="protein"/>
</dbReference>
<dbReference type="Bgee" id="ENSMUSG00000040520">
    <property type="expression patterns" value="Expressed in olfactory epithelium and 219 other cell types or tissues"/>
</dbReference>
<dbReference type="ExpressionAtlas" id="Q6NXH2">
    <property type="expression patterns" value="baseline and differential"/>
</dbReference>
<dbReference type="GO" id="GO:0000139">
    <property type="term" value="C:Golgi membrane"/>
    <property type="evidence" value="ECO:0007669"/>
    <property type="project" value="UniProtKB-SubCell"/>
</dbReference>
<dbReference type="GO" id="GO:0004569">
    <property type="term" value="F:glycoprotein endo-alpha-1,2-mannosidase activity"/>
    <property type="evidence" value="ECO:0007669"/>
    <property type="project" value="UniProtKB-EC"/>
</dbReference>
<dbReference type="CDD" id="cd11574">
    <property type="entry name" value="GH99"/>
    <property type="match status" value="1"/>
</dbReference>
<dbReference type="FunFam" id="3.20.20.80:FF:000019">
    <property type="entry name" value="glycoprotein endo-alpha-1,2-mannosidase"/>
    <property type="match status" value="1"/>
</dbReference>
<dbReference type="Gene3D" id="3.20.20.80">
    <property type="entry name" value="Glycosidases"/>
    <property type="match status" value="1"/>
</dbReference>
<dbReference type="InterPro" id="IPR026071">
    <property type="entry name" value="Glyco_Hydrolase_99"/>
</dbReference>
<dbReference type="PANTHER" id="PTHR13572">
    <property type="entry name" value="ENDO-ALPHA-1,2-MANNOSIDASE"/>
    <property type="match status" value="1"/>
</dbReference>
<dbReference type="PANTHER" id="PTHR13572:SF1">
    <property type="entry name" value="GLYCOPROTEIN ENDO-ALPHA-1,2-MANNOSIDASE"/>
    <property type="match status" value="1"/>
</dbReference>
<dbReference type="Pfam" id="PF16317">
    <property type="entry name" value="Glyco_hydro_99"/>
    <property type="match status" value="1"/>
</dbReference>
<evidence type="ECO:0000250" key="1"/>
<evidence type="ECO:0000250" key="2">
    <source>
        <dbReference type="UniProtKB" id="Q5GF25"/>
    </source>
</evidence>
<evidence type="ECO:0000255" key="3"/>
<evidence type="ECO:0000305" key="4"/>
<gene>
    <name type="primary">Manea</name>
</gene>
<comment type="catalytic activity">
    <reaction evidence="2">
        <text>N-{alpha-Glc-(1-&gt;3)-alpha-Man-(1-&gt;2)-alpha-Man-(1-&gt;2)-alpha-Man-(1-&gt;3)-[alpha-Man-(1-&gt;2)-alpha-Man-(1-&gt;3)-[alpha-Man-(1-&gt;2)-alpha-Man-(1-&gt;6)]-alpha-Man-(1-&gt;6)]-beta-Man-(1-&gt;4)-beta-GlcNAc-(1-&gt;4)-beta-GlcNAc}-L-asparaginyl-[protein] + H2O = alpha-D-glucosyl-(1-&gt;3)-D-mannopyranose + N(4)-{alpha-D-Man-(1-&gt;2)-alpha-D-Man-(1-&gt;3)-[alpha-D-Man-(1-&gt;2)-alpha-D-Man-(1-&gt;3)-[alpha-D-Man-(1-&gt;2)-alpha-D-Man-(1-&gt;6)]-alpha-D-Man-(1-&gt;6)]-beta-D-Man-(1-&gt;4)-beta-D-GlaNAc-(1-&gt;4)-beta-D-GlcNAc}-L-asparaginyl-[protein] (N-glucan mannose isomer 8A1,2,3B1,2)</text>
        <dbReference type="Rhea" id="RHEA:54824"/>
        <dbReference type="Rhea" id="RHEA-COMP:14010"/>
        <dbReference type="Rhea" id="RHEA-COMP:14011"/>
        <dbReference type="ChEBI" id="CHEBI:15377"/>
        <dbReference type="ChEBI" id="CHEBI:52996"/>
        <dbReference type="ChEBI" id="CHEBI:59080"/>
        <dbReference type="ChEBI" id="CHEBI:60627"/>
        <dbReference type="EC" id="3.2.1.130"/>
    </reaction>
</comment>
<comment type="subcellular location">
    <subcellularLocation>
        <location evidence="2">Golgi apparatus membrane</location>
        <topology evidence="2">Single-pass type II membrane protein</topology>
    </subcellularLocation>
</comment>
<comment type="PTM">
    <text evidence="2">Undergoes proteolytic cleavage in the C-terminal region.</text>
</comment>
<comment type="similarity">
    <text evidence="4">Belongs to the glycosyl hydrolase 99 family.</text>
</comment>
<accession>Q6NXH2</accession>
<accession>Q8C0N9</accession>
<organism>
    <name type="scientific">Mus musculus</name>
    <name type="common">Mouse</name>
    <dbReference type="NCBI Taxonomy" id="10090"/>
    <lineage>
        <taxon>Eukaryota</taxon>
        <taxon>Metazoa</taxon>
        <taxon>Chordata</taxon>
        <taxon>Craniata</taxon>
        <taxon>Vertebrata</taxon>
        <taxon>Euteleostomi</taxon>
        <taxon>Mammalia</taxon>
        <taxon>Eutheria</taxon>
        <taxon>Euarchontoglires</taxon>
        <taxon>Glires</taxon>
        <taxon>Rodentia</taxon>
        <taxon>Myomorpha</taxon>
        <taxon>Muroidea</taxon>
        <taxon>Muridae</taxon>
        <taxon>Murinae</taxon>
        <taxon>Mus</taxon>
        <taxon>Mus</taxon>
    </lineage>
</organism>
<sequence>MAKFRRRTCILLSLFILFIFSLMMGLKMLWPNAASFGPPFGLDLLPELHPLNAHSGNKADFQRSDRINMETNTKALKGAGMTVLPAKASEVNLEELPPLNYFLHAFYYSWYGNPQFDGKYIHWNHPVLEHWDPRIAKNYPQGQHSPPDDIGSSFYPELGSYSSRDPSVIETHMKQMRSASIGVLALSWYPPDSRDDNGEATDHLVPTILDKAHKYNLKVTFHIEPYSNRDDQNMHQNIKYIIDKYGNHPAFYRYKTRTGHSLPMFYVYDSYITKPTIWANLLTPSGSQSVRSSPYDGLFIALLVEEKHKNDILQSGFDGIYTYFATNGFTYGSSHQNWNNLKSFCEKNNLMFIPSVGPGYIDTSIRPWNTQNTRNRVNGKYYEVGLSAALQTHPSLISITSFNEWHEGTQIEKAVPKRTANTIYLDYRPHKPSLYLELTRKWSEKFSKERMTYALDQQQPAS</sequence>